<sequence length="345" mass="38498">MQKLTLTRPDDWHLHLRDGDALKAVLPHSARQFARAIVMPNLKPPVRTVADAADYRNRILAALPVGQTFEPLMTLYLTDNTSPEEISAAKASKFVKAVKYYPAGATTNSDFGVTDIRKCDRIFAAMEQEDIPLLLHGEVTDTNIDVFDREKVFIETHLIPLVSRFPKLRVVLEHITTSEAVTFVLNTNENIGATITPQHLLFSRNAIFKGGIRPHYYCLPILKREKHRQALLQAATSGNPKFFLGTDSAPHARNSKEQSCGCAGCYSALHAMELYAEAFESANALDKLEAFASFYGPDFYQLPRNTKTITLAKQTWQIPDEVPFPGTGLVPLRAGEEITWKIMDG</sequence>
<gene>
    <name evidence="1" type="primary">pyrC</name>
    <name type="ordered locus">AM1_5644</name>
</gene>
<name>PYRC_ACAM1</name>
<keyword id="KW-0378">Hydrolase</keyword>
<keyword id="KW-0479">Metal-binding</keyword>
<keyword id="KW-0665">Pyrimidine biosynthesis</keyword>
<keyword id="KW-1185">Reference proteome</keyword>
<keyword id="KW-0862">Zinc</keyword>
<reference key="1">
    <citation type="journal article" date="2008" name="Proc. Natl. Acad. Sci. U.S.A.">
        <title>Niche adaptation and genome expansion in the chlorophyll d-producing cyanobacterium Acaryochloris marina.</title>
        <authorList>
            <person name="Swingley W.D."/>
            <person name="Chen M."/>
            <person name="Cheung P.C."/>
            <person name="Conrad A.L."/>
            <person name="Dejesa L.C."/>
            <person name="Hao J."/>
            <person name="Honchak B.M."/>
            <person name="Karbach L.E."/>
            <person name="Kurdoglu A."/>
            <person name="Lahiri S."/>
            <person name="Mastrian S.D."/>
            <person name="Miyashita H."/>
            <person name="Page L."/>
            <person name="Ramakrishna P."/>
            <person name="Satoh S."/>
            <person name="Sattley W.M."/>
            <person name="Shimada Y."/>
            <person name="Taylor H.L."/>
            <person name="Tomo T."/>
            <person name="Tsuchiya T."/>
            <person name="Wang Z.T."/>
            <person name="Raymond J."/>
            <person name="Mimuro M."/>
            <person name="Blankenship R.E."/>
            <person name="Touchman J.W."/>
        </authorList>
    </citation>
    <scope>NUCLEOTIDE SEQUENCE [LARGE SCALE GENOMIC DNA]</scope>
    <source>
        <strain>MBIC 11017</strain>
    </source>
</reference>
<proteinExistence type="inferred from homology"/>
<protein>
    <recommendedName>
        <fullName evidence="1">Dihydroorotase</fullName>
        <shortName evidence="1">DHOase</shortName>
        <ecNumber evidence="1">3.5.2.3</ecNumber>
    </recommendedName>
</protein>
<comment type="function">
    <text evidence="1">Catalyzes the reversible cyclization of carbamoyl aspartate to dihydroorotate.</text>
</comment>
<comment type="catalytic activity">
    <reaction evidence="1">
        <text>(S)-dihydroorotate + H2O = N-carbamoyl-L-aspartate + H(+)</text>
        <dbReference type="Rhea" id="RHEA:24296"/>
        <dbReference type="ChEBI" id="CHEBI:15377"/>
        <dbReference type="ChEBI" id="CHEBI:15378"/>
        <dbReference type="ChEBI" id="CHEBI:30864"/>
        <dbReference type="ChEBI" id="CHEBI:32814"/>
        <dbReference type="EC" id="3.5.2.3"/>
    </reaction>
</comment>
<comment type="cofactor">
    <cofactor evidence="1">
        <name>Zn(2+)</name>
        <dbReference type="ChEBI" id="CHEBI:29105"/>
    </cofactor>
    <text evidence="1">Binds 2 Zn(2+) ions per subunit.</text>
</comment>
<comment type="pathway">
    <text evidence="1">Pyrimidine metabolism; UMP biosynthesis via de novo pathway; (S)-dihydroorotate from bicarbonate: step 3/3.</text>
</comment>
<comment type="subunit">
    <text evidence="1">Homodimer.</text>
</comment>
<comment type="similarity">
    <text evidence="1">Belongs to the metallo-dependent hydrolases superfamily. DHOase family. Class II DHOase subfamily.</text>
</comment>
<dbReference type="EC" id="3.5.2.3" evidence="1"/>
<dbReference type="EMBL" id="CP000828">
    <property type="protein sequence ID" value="ABW30594.1"/>
    <property type="molecule type" value="Genomic_DNA"/>
</dbReference>
<dbReference type="RefSeq" id="WP_012165814.1">
    <property type="nucleotide sequence ID" value="NC_009925.1"/>
</dbReference>
<dbReference type="SMR" id="B0CF78"/>
<dbReference type="STRING" id="329726.AM1_5644"/>
<dbReference type="MEROPS" id="M38.A02"/>
<dbReference type="KEGG" id="amr:AM1_5644"/>
<dbReference type="eggNOG" id="COG0418">
    <property type="taxonomic scope" value="Bacteria"/>
</dbReference>
<dbReference type="HOGENOM" id="CLU_041558_1_0_3"/>
<dbReference type="OrthoDB" id="9808095at2"/>
<dbReference type="UniPathway" id="UPA00070">
    <property type="reaction ID" value="UER00117"/>
</dbReference>
<dbReference type="Proteomes" id="UP000000268">
    <property type="component" value="Chromosome"/>
</dbReference>
<dbReference type="GO" id="GO:0005829">
    <property type="term" value="C:cytosol"/>
    <property type="evidence" value="ECO:0007669"/>
    <property type="project" value="TreeGrafter"/>
</dbReference>
<dbReference type="GO" id="GO:0004151">
    <property type="term" value="F:dihydroorotase activity"/>
    <property type="evidence" value="ECO:0007669"/>
    <property type="project" value="UniProtKB-UniRule"/>
</dbReference>
<dbReference type="GO" id="GO:0008270">
    <property type="term" value="F:zinc ion binding"/>
    <property type="evidence" value="ECO:0007669"/>
    <property type="project" value="UniProtKB-UniRule"/>
</dbReference>
<dbReference type="GO" id="GO:0006207">
    <property type="term" value="P:'de novo' pyrimidine nucleobase biosynthetic process"/>
    <property type="evidence" value="ECO:0007669"/>
    <property type="project" value="TreeGrafter"/>
</dbReference>
<dbReference type="GO" id="GO:0044205">
    <property type="term" value="P:'de novo' UMP biosynthetic process"/>
    <property type="evidence" value="ECO:0007669"/>
    <property type="project" value="UniProtKB-UniRule"/>
</dbReference>
<dbReference type="CDD" id="cd01294">
    <property type="entry name" value="DHOase"/>
    <property type="match status" value="1"/>
</dbReference>
<dbReference type="FunFam" id="3.20.20.140:FF:000006">
    <property type="entry name" value="Dihydroorotase"/>
    <property type="match status" value="1"/>
</dbReference>
<dbReference type="Gene3D" id="3.20.20.140">
    <property type="entry name" value="Metal-dependent hydrolases"/>
    <property type="match status" value="1"/>
</dbReference>
<dbReference type="HAMAP" id="MF_00219">
    <property type="entry name" value="PyrC_classII"/>
    <property type="match status" value="1"/>
</dbReference>
<dbReference type="InterPro" id="IPR006680">
    <property type="entry name" value="Amidohydro-rel"/>
</dbReference>
<dbReference type="InterPro" id="IPR004721">
    <property type="entry name" value="DHOdimr"/>
</dbReference>
<dbReference type="InterPro" id="IPR002195">
    <property type="entry name" value="Dihydroorotase_CS"/>
</dbReference>
<dbReference type="InterPro" id="IPR032466">
    <property type="entry name" value="Metal_Hydrolase"/>
</dbReference>
<dbReference type="NCBIfam" id="TIGR00856">
    <property type="entry name" value="pyrC_dimer"/>
    <property type="match status" value="1"/>
</dbReference>
<dbReference type="PANTHER" id="PTHR43137">
    <property type="entry name" value="DIHYDROOROTASE"/>
    <property type="match status" value="1"/>
</dbReference>
<dbReference type="PANTHER" id="PTHR43137:SF1">
    <property type="entry name" value="DIHYDROOROTASE"/>
    <property type="match status" value="1"/>
</dbReference>
<dbReference type="Pfam" id="PF01979">
    <property type="entry name" value="Amidohydro_1"/>
    <property type="match status" value="1"/>
</dbReference>
<dbReference type="PIRSF" id="PIRSF001237">
    <property type="entry name" value="DHOdimr"/>
    <property type="match status" value="1"/>
</dbReference>
<dbReference type="SUPFAM" id="SSF51556">
    <property type="entry name" value="Metallo-dependent hydrolases"/>
    <property type="match status" value="1"/>
</dbReference>
<dbReference type="PROSITE" id="PS00482">
    <property type="entry name" value="DIHYDROOROTASE_1"/>
    <property type="match status" value="1"/>
</dbReference>
<dbReference type="PROSITE" id="PS00483">
    <property type="entry name" value="DIHYDROOROTASE_2"/>
    <property type="match status" value="1"/>
</dbReference>
<accession>B0CF78</accession>
<evidence type="ECO:0000255" key="1">
    <source>
        <dbReference type="HAMAP-Rule" id="MF_00219"/>
    </source>
</evidence>
<organism>
    <name type="scientific">Acaryochloris marina (strain MBIC 11017)</name>
    <dbReference type="NCBI Taxonomy" id="329726"/>
    <lineage>
        <taxon>Bacteria</taxon>
        <taxon>Bacillati</taxon>
        <taxon>Cyanobacteriota</taxon>
        <taxon>Cyanophyceae</taxon>
        <taxon>Acaryochloridales</taxon>
        <taxon>Acaryochloridaceae</taxon>
        <taxon>Acaryochloris</taxon>
    </lineage>
</organism>
<feature type="chain" id="PRO_1000078095" description="Dihydroorotase">
    <location>
        <begin position="1"/>
        <end position="345"/>
    </location>
</feature>
<feature type="active site" evidence="1">
    <location>
        <position position="247"/>
    </location>
</feature>
<feature type="binding site" evidence="1">
    <location>
        <position position="13"/>
    </location>
    <ligand>
        <name>Zn(2+)</name>
        <dbReference type="ChEBI" id="CHEBI:29105"/>
        <label>1</label>
    </ligand>
</feature>
<feature type="binding site" evidence="1">
    <location>
        <begin position="15"/>
        <end position="17"/>
    </location>
    <ligand>
        <name>substrate</name>
    </ligand>
</feature>
<feature type="binding site" evidence="1">
    <location>
        <position position="15"/>
    </location>
    <ligand>
        <name>Zn(2+)</name>
        <dbReference type="ChEBI" id="CHEBI:29105"/>
        <label>1</label>
    </ligand>
</feature>
<feature type="binding site" evidence="1">
    <location>
        <position position="41"/>
    </location>
    <ligand>
        <name>substrate</name>
    </ligand>
</feature>
<feature type="binding site" description="via carbamate group" evidence="1">
    <location>
        <position position="99"/>
    </location>
    <ligand>
        <name>Zn(2+)</name>
        <dbReference type="ChEBI" id="CHEBI:29105"/>
        <label>1</label>
    </ligand>
</feature>
<feature type="binding site" description="via carbamate group" evidence="1">
    <location>
        <position position="99"/>
    </location>
    <ligand>
        <name>Zn(2+)</name>
        <dbReference type="ChEBI" id="CHEBI:29105"/>
        <label>2</label>
    </ligand>
</feature>
<feature type="binding site" evidence="1">
    <location>
        <position position="136"/>
    </location>
    <ligand>
        <name>substrate</name>
    </ligand>
</feature>
<feature type="binding site" evidence="1">
    <location>
        <position position="136"/>
    </location>
    <ligand>
        <name>Zn(2+)</name>
        <dbReference type="ChEBI" id="CHEBI:29105"/>
        <label>2</label>
    </ligand>
</feature>
<feature type="binding site" evidence="1">
    <location>
        <position position="174"/>
    </location>
    <ligand>
        <name>Zn(2+)</name>
        <dbReference type="ChEBI" id="CHEBI:29105"/>
        <label>2</label>
    </ligand>
</feature>
<feature type="binding site" evidence="1">
    <location>
        <position position="219"/>
    </location>
    <ligand>
        <name>substrate</name>
    </ligand>
</feature>
<feature type="binding site" evidence="1">
    <location>
        <position position="247"/>
    </location>
    <ligand>
        <name>Zn(2+)</name>
        <dbReference type="ChEBI" id="CHEBI:29105"/>
        <label>1</label>
    </ligand>
</feature>
<feature type="binding site" evidence="1">
    <location>
        <position position="251"/>
    </location>
    <ligand>
        <name>substrate</name>
    </ligand>
</feature>
<feature type="binding site" evidence="1">
    <location>
        <position position="263"/>
    </location>
    <ligand>
        <name>substrate</name>
    </ligand>
</feature>
<feature type="modified residue" description="N6-carboxylysine" evidence="1">
    <location>
        <position position="99"/>
    </location>
</feature>